<proteinExistence type="inferred from homology"/>
<evidence type="ECO:0000255" key="1">
    <source>
        <dbReference type="HAMAP-Rule" id="MF_00194"/>
    </source>
</evidence>
<evidence type="ECO:0000305" key="2"/>
<organism>
    <name type="scientific">Escherichia coli O157:H7</name>
    <dbReference type="NCBI Taxonomy" id="83334"/>
    <lineage>
        <taxon>Bacteria</taxon>
        <taxon>Pseudomonadati</taxon>
        <taxon>Pseudomonadota</taxon>
        <taxon>Gammaproteobacteria</taxon>
        <taxon>Enterobacterales</taxon>
        <taxon>Enterobacteriaceae</taxon>
        <taxon>Escherichia</taxon>
    </lineage>
</organism>
<gene>
    <name evidence="1" type="primary">rdgC</name>
    <name type="ordered locus">Z0492</name>
    <name type="ordered locus">ECs0444</name>
</gene>
<protein>
    <recommendedName>
        <fullName evidence="1">Recombination-associated protein RdgC</fullName>
    </recommendedName>
</protein>
<feature type="chain" id="PRO_0000211739" description="Recombination-associated protein RdgC">
    <location>
        <begin position="1"/>
        <end position="303"/>
    </location>
</feature>
<dbReference type="EMBL" id="AE005174">
    <property type="protein sequence ID" value="AAG54740.1"/>
    <property type="molecule type" value="Genomic_DNA"/>
</dbReference>
<dbReference type="EMBL" id="BA000007">
    <property type="protein sequence ID" value="BAB33868.2"/>
    <property type="status" value="ALT_INIT"/>
    <property type="molecule type" value="Genomic_DNA"/>
</dbReference>
<dbReference type="PIR" id="D90684">
    <property type="entry name" value="D90684"/>
</dbReference>
<dbReference type="PIR" id="H85534">
    <property type="entry name" value="H85534"/>
</dbReference>
<dbReference type="RefSeq" id="NP_308472.2">
    <property type="nucleotide sequence ID" value="NC_002695.1"/>
</dbReference>
<dbReference type="RefSeq" id="WP_001301975.1">
    <property type="nucleotide sequence ID" value="NZ_VOAI01000005.1"/>
</dbReference>
<dbReference type="SMR" id="Q8XEA1"/>
<dbReference type="STRING" id="155864.Z0492"/>
<dbReference type="GeneID" id="914547"/>
<dbReference type="KEGG" id="ece:Z0492"/>
<dbReference type="KEGG" id="ecs:ECs_0444"/>
<dbReference type="PATRIC" id="fig|386585.9.peg.540"/>
<dbReference type="eggNOG" id="COG1940">
    <property type="taxonomic scope" value="Bacteria"/>
</dbReference>
<dbReference type="eggNOG" id="COG2974">
    <property type="taxonomic scope" value="Bacteria"/>
</dbReference>
<dbReference type="HOGENOM" id="CLU_052038_1_1_6"/>
<dbReference type="OMA" id="TGWVPPM"/>
<dbReference type="Proteomes" id="UP000000558">
    <property type="component" value="Chromosome"/>
</dbReference>
<dbReference type="Proteomes" id="UP000002519">
    <property type="component" value="Chromosome"/>
</dbReference>
<dbReference type="GO" id="GO:0043590">
    <property type="term" value="C:bacterial nucleoid"/>
    <property type="evidence" value="ECO:0007669"/>
    <property type="project" value="TreeGrafter"/>
</dbReference>
<dbReference type="GO" id="GO:0005737">
    <property type="term" value="C:cytoplasm"/>
    <property type="evidence" value="ECO:0007669"/>
    <property type="project" value="UniProtKB-UniRule"/>
</dbReference>
<dbReference type="GO" id="GO:0003690">
    <property type="term" value="F:double-stranded DNA binding"/>
    <property type="evidence" value="ECO:0007669"/>
    <property type="project" value="TreeGrafter"/>
</dbReference>
<dbReference type="GO" id="GO:0006310">
    <property type="term" value="P:DNA recombination"/>
    <property type="evidence" value="ECO:0007669"/>
    <property type="project" value="UniProtKB-UniRule"/>
</dbReference>
<dbReference type="GO" id="GO:0000018">
    <property type="term" value="P:regulation of DNA recombination"/>
    <property type="evidence" value="ECO:0007669"/>
    <property type="project" value="TreeGrafter"/>
</dbReference>
<dbReference type="HAMAP" id="MF_00194">
    <property type="entry name" value="RdgC"/>
    <property type="match status" value="1"/>
</dbReference>
<dbReference type="InterPro" id="IPR007476">
    <property type="entry name" value="RdgC"/>
</dbReference>
<dbReference type="NCBIfam" id="NF001460">
    <property type="entry name" value="PRK00321.1-1"/>
    <property type="match status" value="1"/>
</dbReference>
<dbReference type="NCBIfam" id="NF001462">
    <property type="entry name" value="PRK00321.1-3"/>
    <property type="match status" value="1"/>
</dbReference>
<dbReference type="NCBIfam" id="NF001464">
    <property type="entry name" value="PRK00321.1-5"/>
    <property type="match status" value="1"/>
</dbReference>
<dbReference type="PANTHER" id="PTHR38103">
    <property type="entry name" value="RECOMBINATION-ASSOCIATED PROTEIN RDGC"/>
    <property type="match status" value="1"/>
</dbReference>
<dbReference type="PANTHER" id="PTHR38103:SF1">
    <property type="entry name" value="RECOMBINATION-ASSOCIATED PROTEIN RDGC"/>
    <property type="match status" value="1"/>
</dbReference>
<dbReference type="Pfam" id="PF04381">
    <property type="entry name" value="RdgC"/>
    <property type="match status" value="1"/>
</dbReference>
<reference key="1">
    <citation type="journal article" date="2001" name="Nature">
        <title>Genome sequence of enterohaemorrhagic Escherichia coli O157:H7.</title>
        <authorList>
            <person name="Perna N.T."/>
            <person name="Plunkett G. III"/>
            <person name="Burland V."/>
            <person name="Mau B."/>
            <person name="Glasner J.D."/>
            <person name="Rose D.J."/>
            <person name="Mayhew G.F."/>
            <person name="Evans P.S."/>
            <person name="Gregor J."/>
            <person name="Kirkpatrick H.A."/>
            <person name="Posfai G."/>
            <person name="Hackett J."/>
            <person name="Klink S."/>
            <person name="Boutin A."/>
            <person name="Shao Y."/>
            <person name="Miller L."/>
            <person name="Grotbeck E.J."/>
            <person name="Davis N.W."/>
            <person name="Lim A."/>
            <person name="Dimalanta E.T."/>
            <person name="Potamousis K."/>
            <person name="Apodaca J."/>
            <person name="Anantharaman T.S."/>
            <person name="Lin J."/>
            <person name="Yen G."/>
            <person name="Schwartz D.C."/>
            <person name="Welch R.A."/>
            <person name="Blattner F.R."/>
        </authorList>
    </citation>
    <scope>NUCLEOTIDE SEQUENCE [LARGE SCALE GENOMIC DNA]</scope>
    <source>
        <strain>O157:H7 / EDL933 / ATCC 700927 / EHEC</strain>
    </source>
</reference>
<reference key="2">
    <citation type="journal article" date="2001" name="DNA Res.">
        <title>Complete genome sequence of enterohemorrhagic Escherichia coli O157:H7 and genomic comparison with a laboratory strain K-12.</title>
        <authorList>
            <person name="Hayashi T."/>
            <person name="Makino K."/>
            <person name="Ohnishi M."/>
            <person name="Kurokawa K."/>
            <person name="Ishii K."/>
            <person name="Yokoyama K."/>
            <person name="Han C.-G."/>
            <person name="Ohtsubo E."/>
            <person name="Nakayama K."/>
            <person name="Murata T."/>
            <person name="Tanaka M."/>
            <person name="Tobe T."/>
            <person name="Iida T."/>
            <person name="Takami H."/>
            <person name="Honda T."/>
            <person name="Sasakawa C."/>
            <person name="Ogasawara N."/>
            <person name="Yasunaga T."/>
            <person name="Kuhara S."/>
            <person name="Shiba T."/>
            <person name="Hattori M."/>
            <person name="Shinagawa H."/>
        </authorList>
    </citation>
    <scope>NUCLEOTIDE SEQUENCE [LARGE SCALE GENOMIC DNA]</scope>
    <source>
        <strain>O157:H7 / Sakai / RIMD 0509952 / EHEC</strain>
    </source>
</reference>
<sequence length="303" mass="33935">MLWFKNLMVYRLSREISLRAEEMEKQLASMAFTPCGSQDMAKMGWVPPMGSHSDALTHVANGQIVICARKEEKILPSPVIKQALEAKIAKLEAEQARKLKKTEKDSLKDEVLHSLLPRAFSRFSQTMMWIDTVNGLIMVDCASAKKAEDTLALLRKSLGSLPVVPLSMANPIELTLTEWVRSGSAAQGFQLLDEAELKSLLEDGGVIRAKKQDLTSEEITNHIEAGKVVTKLALDWQQRIQFVMCDDGSLKRLKFCDELRDQNEDIDREDFAQRFDADFILMTGELAALIQNLIEGLGGEAQR</sequence>
<name>RDGC_ECO57</name>
<keyword id="KW-0963">Cytoplasm</keyword>
<keyword id="KW-0233">DNA recombination</keyword>
<keyword id="KW-1185">Reference proteome</keyword>
<comment type="function">
    <text evidence="1">May be involved in recombination.</text>
</comment>
<comment type="subcellular location">
    <subcellularLocation>
        <location evidence="1">Cytoplasm</location>
        <location evidence="1">Nucleoid</location>
    </subcellularLocation>
</comment>
<comment type="similarity">
    <text evidence="1">Belongs to the RdgC family.</text>
</comment>
<comment type="sequence caution" evidence="2">
    <conflict type="erroneous initiation">
        <sequence resource="EMBL-CDS" id="BAB33868"/>
    </conflict>
    <text>Extended N-terminus.</text>
</comment>
<accession>Q8XEA1</accession>
<accession>Q7AH22</accession>
<accession>Q8XEA0</accession>